<protein>
    <recommendedName>
        <fullName evidence="1">UPF0349 protein SA0800</fullName>
    </recommendedName>
</protein>
<reference key="1">
    <citation type="journal article" date="2001" name="Lancet">
        <title>Whole genome sequencing of meticillin-resistant Staphylococcus aureus.</title>
        <authorList>
            <person name="Kuroda M."/>
            <person name="Ohta T."/>
            <person name="Uchiyama I."/>
            <person name="Baba T."/>
            <person name="Yuzawa H."/>
            <person name="Kobayashi I."/>
            <person name="Cui L."/>
            <person name="Oguchi A."/>
            <person name="Aoki K."/>
            <person name="Nagai Y."/>
            <person name="Lian J.-Q."/>
            <person name="Ito T."/>
            <person name="Kanamori M."/>
            <person name="Matsumaru H."/>
            <person name="Maruyama A."/>
            <person name="Murakami H."/>
            <person name="Hosoyama A."/>
            <person name="Mizutani-Ui Y."/>
            <person name="Takahashi N.K."/>
            <person name="Sawano T."/>
            <person name="Inoue R."/>
            <person name="Kaito C."/>
            <person name="Sekimizu K."/>
            <person name="Hirakawa H."/>
            <person name="Kuhara S."/>
            <person name="Goto S."/>
            <person name="Yabuzaki J."/>
            <person name="Kanehisa M."/>
            <person name="Yamashita A."/>
            <person name="Oshima K."/>
            <person name="Furuya K."/>
            <person name="Yoshino C."/>
            <person name="Shiba T."/>
            <person name="Hattori M."/>
            <person name="Ogasawara N."/>
            <person name="Hayashi H."/>
            <person name="Hiramatsu K."/>
        </authorList>
    </citation>
    <scope>NUCLEOTIDE SEQUENCE [LARGE SCALE GENOMIC DNA]</scope>
    <source>
        <strain>N315</strain>
    </source>
</reference>
<name>Y800_STAAN</name>
<gene>
    <name type="ordered locus">SA0800</name>
</gene>
<dbReference type="EMBL" id="BA000018">
    <property type="protein sequence ID" value="BAB42039.1"/>
    <property type="molecule type" value="Genomic_DNA"/>
</dbReference>
<dbReference type="PIR" id="D89860">
    <property type="entry name" value="D89860"/>
</dbReference>
<dbReference type="RefSeq" id="WP_001068337.1">
    <property type="nucleotide sequence ID" value="NC_002745.2"/>
</dbReference>
<dbReference type="SMR" id="Q7A6J6"/>
<dbReference type="EnsemblBacteria" id="BAB42039">
    <property type="protein sequence ID" value="BAB42039"/>
    <property type="gene ID" value="BAB42039"/>
</dbReference>
<dbReference type="KEGG" id="sau:SA0800"/>
<dbReference type="HOGENOM" id="CLU_182025_0_0_9"/>
<dbReference type="HAMAP" id="MF_01542">
    <property type="entry name" value="UPF0349"/>
    <property type="match status" value="1"/>
</dbReference>
<dbReference type="InterPro" id="IPR009910">
    <property type="entry name" value="DUF1450"/>
</dbReference>
<dbReference type="InterPro" id="IPR022916">
    <property type="entry name" value="UPF0349"/>
</dbReference>
<dbReference type="NCBIfam" id="NF010190">
    <property type="entry name" value="PRK13669.1"/>
    <property type="match status" value="1"/>
</dbReference>
<dbReference type="Pfam" id="PF07293">
    <property type="entry name" value="DUF1450"/>
    <property type="match status" value="1"/>
</dbReference>
<feature type="chain" id="PRO_0000165896" description="UPF0349 protein SA0800">
    <location>
        <begin position="1"/>
        <end position="78"/>
    </location>
</feature>
<organism>
    <name type="scientific">Staphylococcus aureus (strain N315)</name>
    <dbReference type="NCBI Taxonomy" id="158879"/>
    <lineage>
        <taxon>Bacteria</taxon>
        <taxon>Bacillati</taxon>
        <taxon>Bacillota</taxon>
        <taxon>Bacilli</taxon>
        <taxon>Bacillales</taxon>
        <taxon>Staphylococcaceae</taxon>
        <taxon>Staphylococcus</taxon>
    </lineage>
</organism>
<evidence type="ECO:0000255" key="1">
    <source>
        <dbReference type="HAMAP-Rule" id="MF_01542"/>
    </source>
</evidence>
<comment type="similarity">
    <text evidence="1">Belongs to the UPF0349 family.</text>
</comment>
<proteinExistence type="inferred from homology"/>
<sequence length="78" mass="8657">MNPIVEFCLSNMAKGGDYVFNQLENDPDVDVLEYGCLTHCGICSAGLYALVNGDIVEGDSPEELLQNIYAHIKETWIF</sequence>
<accession>Q7A6J6</accession>